<dbReference type="EMBL" id="DQ020097">
    <property type="protein sequence ID" value="AAY85656.1"/>
    <property type="molecule type" value="Genomic_DNA"/>
</dbReference>
<dbReference type="EMBL" id="DQ020098">
    <property type="status" value="NOT_ANNOTATED_CDS"/>
    <property type="molecule type" value="Genomic_DNA"/>
</dbReference>
<dbReference type="EMBL" id="CM000785">
    <property type="protein sequence ID" value="AFW88363.1"/>
    <property type="molecule type" value="Genomic_DNA"/>
</dbReference>
<dbReference type="STRING" id="4577.K7VLR4"/>
<dbReference type="GlyCosmos" id="K7VLR4">
    <property type="glycosylation" value="18 sites, No reported glycans"/>
</dbReference>
<dbReference type="PaxDb" id="4577-GRMZM2G448687_P01"/>
<dbReference type="MaizeGDB" id="9018755"/>
<dbReference type="eggNOG" id="KOG1910">
    <property type="taxonomic scope" value="Eukaryota"/>
</dbReference>
<dbReference type="InParanoid" id="K7VLR4"/>
<dbReference type="Proteomes" id="UP000007305">
    <property type="component" value="Unplaced"/>
</dbReference>
<dbReference type="ExpressionAtlas" id="K7VLR4">
    <property type="expression patterns" value="baseline and differential"/>
</dbReference>
<dbReference type="GO" id="GO:0005576">
    <property type="term" value="C:extracellular region"/>
    <property type="evidence" value="ECO:0007669"/>
    <property type="project" value="UniProtKB-SubCell"/>
</dbReference>
<dbReference type="GO" id="GO:0005794">
    <property type="term" value="C:Golgi apparatus"/>
    <property type="evidence" value="ECO:0000314"/>
    <property type="project" value="UniProtKB"/>
</dbReference>
<dbReference type="GO" id="GO:0048868">
    <property type="term" value="P:pollen tube development"/>
    <property type="evidence" value="ECO:0000315"/>
    <property type="project" value="UniProtKB"/>
</dbReference>
<dbReference type="InterPro" id="IPR019441">
    <property type="entry name" value="FMP27/BLTP2/Hobbit_GFWDK_RBG"/>
</dbReference>
<dbReference type="InterPro" id="IPR045167">
    <property type="entry name" value="Hobbit"/>
</dbReference>
<dbReference type="PANTHER" id="PTHR15678">
    <property type="entry name" value="ANTIGEN MLAA-22-RELATED"/>
    <property type="match status" value="1"/>
</dbReference>
<dbReference type="PANTHER" id="PTHR15678:SF8">
    <property type="entry name" value="PROTEIN KINKY POLLEN"/>
    <property type="match status" value="1"/>
</dbReference>
<dbReference type="Pfam" id="PF10344">
    <property type="entry name" value="Hobbit"/>
    <property type="match status" value="1"/>
</dbReference>
<dbReference type="SMART" id="SM01214">
    <property type="entry name" value="Fmp27_GFWDK"/>
    <property type="match status" value="1"/>
</dbReference>
<reference key="1">
    <citation type="journal article" date="2006" name="Genetics">
        <title>The maize aberrant pollen transmission 1 gene is a SABRE/KIP homolog required for pollen tube growth.</title>
        <authorList>
            <person name="Xu Z."/>
            <person name="Dooner H.K."/>
        </authorList>
    </citation>
    <scope>NUCLEOTIDE SEQUENCE [GENOMIC DNA]</scope>
    <scope>FUNCTION</scope>
    <scope>DISRUPTION PHENOTYPE</scope>
    <scope>TISSUE SPECIFICITY</scope>
    <scope>SUBCELLULAR LOCATION</scope>
    <source>
        <strain>cv. B73 Inbred</strain>
    </source>
</reference>
<reference key="2">
    <citation type="journal article" date="2009" name="Science">
        <title>The B73 maize genome: complexity, diversity, and dynamics.</title>
        <authorList>
            <person name="Schnable P.S."/>
            <person name="Ware D."/>
            <person name="Fulton R.S."/>
            <person name="Stein J.C."/>
            <person name="Wei F."/>
            <person name="Pasternak S."/>
            <person name="Liang C."/>
            <person name="Zhang J."/>
            <person name="Fulton L."/>
            <person name="Graves T.A."/>
            <person name="Minx P."/>
            <person name="Reily A.D."/>
            <person name="Courtney L."/>
            <person name="Kruchowski S.S."/>
            <person name="Tomlinson C."/>
            <person name="Strong C."/>
            <person name="Delehaunty K."/>
            <person name="Fronick C."/>
            <person name="Courtney B."/>
            <person name="Rock S.M."/>
            <person name="Belter E."/>
            <person name="Du F."/>
            <person name="Kim K."/>
            <person name="Abbott R.M."/>
            <person name="Cotton M."/>
            <person name="Levy A."/>
            <person name="Marchetto P."/>
            <person name="Ochoa K."/>
            <person name="Jackson S.M."/>
            <person name="Gillam B."/>
            <person name="Chen W."/>
            <person name="Yan L."/>
            <person name="Higginbotham J."/>
            <person name="Cardenas M."/>
            <person name="Waligorski J."/>
            <person name="Applebaum E."/>
            <person name="Phelps L."/>
            <person name="Falcone J."/>
            <person name="Kanchi K."/>
            <person name="Thane T."/>
            <person name="Scimone A."/>
            <person name="Thane N."/>
            <person name="Henke J."/>
            <person name="Wang T."/>
            <person name="Ruppert J."/>
            <person name="Shah N."/>
            <person name="Rotter K."/>
            <person name="Hodges J."/>
            <person name="Ingenthron E."/>
            <person name="Cordes M."/>
            <person name="Kohlberg S."/>
            <person name="Sgro J."/>
            <person name="Delgado B."/>
            <person name="Mead K."/>
            <person name="Chinwalla A."/>
            <person name="Leonard S."/>
            <person name="Crouse K."/>
            <person name="Collura K."/>
            <person name="Kudrna D."/>
            <person name="Currie J."/>
            <person name="He R."/>
            <person name="Angelova A."/>
            <person name="Rajasekar S."/>
            <person name="Mueller T."/>
            <person name="Lomeli R."/>
            <person name="Scara G."/>
            <person name="Ko A."/>
            <person name="Delaney K."/>
            <person name="Wissotski M."/>
            <person name="Lopez G."/>
            <person name="Campos D."/>
            <person name="Braidotti M."/>
            <person name="Ashley E."/>
            <person name="Golser W."/>
            <person name="Kim H."/>
            <person name="Lee S."/>
            <person name="Lin J."/>
            <person name="Dujmic Z."/>
            <person name="Kim W."/>
            <person name="Talag J."/>
            <person name="Zuccolo A."/>
            <person name="Fan C."/>
            <person name="Sebastian A."/>
            <person name="Kramer M."/>
            <person name="Spiegel L."/>
            <person name="Nascimento L."/>
            <person name="Zutavern T."/>
            <person name="Miller B."/>
            <person name="Ambroise C."/>
            <person name="Muller S."/>
            <person name="Spooner W."/>
            <person name="Narechania A."/>
            <person name="Ren L."/>
            <person name="Wei S."/>
            <person name="Kumari S."/>
            <person name="Faga B."/>
            <person name="Levy M.J."/>
            <person name="McMahan L."/>
            <person name="Van Buren P."/>
            <person name="Vaughn M.W."/>
            <person name="Ying K."/>
            <person name="Yeh C.-T."/>
            <person name="Emrich S.J."/>
            <person name="Jia Y."/>
            <person name="Kalyanaraman A."/>
            <person name="Hsia A.-P."/>
            <person name="Barbazuk W.B."/>
            <person name="Baucom R.S."/>
            <person name="Brutnell T.P."/>
            <person name="Carpita N.C."/>
            <person name="Chaparro C."/>
            <person name="Chia J.-M."/>
            <person name="Deragon J.-M."/>
            <person name="Estill J.C."/>
            <person name="Fu Y."/>
            <person name="Jeddeloh J.A."/>
            <person name="Han Y."/>
            <person name="Lee H."/>
            <person name="Li P."/>
            <person name="Lisch D.R."/>
            <person name="Liu S."/>
            <person name="Liu Z."/>
            <person name="Nagel D.H."/>
            <person name="McCann M.C."/>
            <person name="SanMiguel P."/>
            <person name="Myers A.M."/>
            <person name="Nettleton D."/>
            <person name="Nguyen J."/>
            <person name="Penning B.W."/>
            <person name="Ponnala L."/>
            <person name="Schneider K.L."/>
            <person name="Schwartz D.C."/>
            <person name="Sharma A."/>
            <person name="Soderlund C."/>
            <person name="Springer N.M."/>
            <person name="Sun Q."/>
            <person name="Wang H."/>
            <person name="Waterman M."/>
            <person name="Westerman R."/>
            <person name="Wolfgruber T.K."/>
            <person name="Yang L."/>
            <person name="Yu Y."/>
            <person name="Zhang L."/>
            <person name="Zhou S."/>
            <person name="Zhu Q."/>
            <person name="Bennetzen J.L."/>
            <person name="Dawe R.K."/>
            <person name="Jiang J."/>
            <person name="Jiang N."/>
            <person name="Presting G.G."/>
            <person name="Wessler S.R."/>
            <person name="Aluru S."/>
            <person name="Martienssen R.A."/>
            <person name="Clifton S.W."/>
            <person name="McCombie W.R."/>
            <person name="Wing R.A."/>
            <person name="Wilson R.K."/>
        </authorList>
    </citation>
    <scope>NUCLEOTIDE SEQUENCE [LARGE SCALE GENOMIC DNA]</scope>
    <source>
        <strain>cv. B73</strain>
    </source>
</reference>
<gene>
    <name evidence="6" type="primary">APT1</name>
    <name evidence="8" type="ORF">ZEAMMB73_995624</name>
</gene>
<name>APT1_MAIZE</name>
<proteinExistence type="evidence at transcript level"/>
<keyword id="KW-0217">Developmental protein</keyword>
<keyword id="KW-0325">Glycoprotein</keyword>
<keyword id="KW-0333">Golgi apparatus</keyword>
<keyword id="KW-1185">Reference proteome</keyword>
<keyword id="KW-0964">Secreted</keyword>
<keyword id="KW-0732">Signal</keyword>
<organism evidence="9">
    <name type="scientific">Zea mays</name>
    <name type="common">Maize</name>
    <dbReference type="NCBI Taxonomy" id="4577"/>
    <lineage>
        <taxon>Eukaryota</taxon>
        <taxon>Viridiplantae</taxon>
        <taxon>Streptophyta</taxon>
        <taxon>Embryophyta</taxon>
        <taxon>Tracheophyta</taxon>
        <taxon>Spermatophyta</taxon>
        <taxon>Magnoliopsida</taxon>
        <taxon>Liliopsida</taxon>
        <taxon>Poales</taxon>
        <taxon>Poaceae</taxon>
        <taxon>PACMAD clade</taxon>
        <taxon>Panicoideae</taxon>
        <taxon>Andropogonodae</taxon>
        <taxon>Andropogoneae</taxon>
        <taxon>Tripsacinae</taxon>
        <taxon>Zea</taxon>
    </lineage>
</organism>
<sequence length="2605" mass="291341">MMLGLVQLLVGFVVAWEAVELVLRHGLLLSVFKLAILAALAAAAGCVAIIFFARAVAWVLQRAAKLSIGCRSYGFNYLRDITISSPKGAVESICIGEIRLGLRKPITQLGFTVLTHGPILQLQISDLDVVLRQPVKSTNKKKPAPRKPISTTTAKAKGKSKGQVKWRLITSMASLLSLSIVELRLKAPKAALGIKDLKTDISKTGGLDPVLNVQVNIIPLFVQALDSDSIGNNTLVFSKLDWWVSGQYCSAMDTSDHSSFLFEDISLSCDLHQRDKAIRVKNLDLMLGPIVVNLEEKLLAKKKPSASTVAEQKDEPSVDNKSAARSEGGKLASLNKKISMFPEKVSFNMSKLVLKFLPKDHGLSINNEIGSISLRCTRLQPQDFGEVTTHIRLETDVTEIHLLMDGATSVLEVVKVSTVVSANIPSQPALPVQAEVDIKISGFQCNLIVSRIKPLIRINSDKKKPLVLHENPQQKKAPKEKLALSLACTMSVPELTLVLHSLDDVPLYHCIFQSANVSASKMIDRGTQLHGKLGDLKFLVPSKHQQSMKEGASGTLLHISHSTLDLEQNDPGQDNDEDHAKSAISVNISGIRMHFCFSYLESLCATAMSYKVFMKSILPPKKRSVQENASQKSTKKAKRALLLKINVAQCSIVYDGEMRLEDMSIADPKRVNFGSQGGRVVIINEANGSPRMAYVNSTSLPDHKNVHFSTSLEIYQFGVSLNKAKHTMQVELENFRLTHKEDQLDNKPVEETKLFDVRKAKFVQRSGGLNDIAACSLINVTDIAVRWEPDPYLELLEVATRLKSVLHRMKLQNSVTEVKDNIEHGYSFQKGITLRPWSARKAQKKRESVIAIDLESLKISGELADGVEAMITVGYIFSENAKIGVLVEGISVSFCGAWILKSSRMQLSRIPISVSDSNSDKKLQSAAACDWVIQCRDVNICLPFRLQLRAIDDAVEDTLRAFKLISAAKTSVLFPEKKSSTTSSKKSKPKSTAFRYVRIIVRDLIAEIEEEPMQGWLDEHMILMKNVFCESTVRLNLLDELSSGKNKDSPKAKLDSSEKNSGCPDVDAYVPGTHSIEKLREEIYRQAFQSYYQACQKLPVSEGSGACSSGFQSGFKMSTRRASVMSVCAKDVDVSLSKIDGGDEGMISFIKSLDPVCDKDDIPFSRLYGSNFSLKTRSLSAYLRDYTFPLFSGTNGKCDGRLVLGQQATCFQPQARQDVYVGKWWRVNLLRSATGYTPPMKTYADIPLYFKKAEVSFGVGYEPVFADVSYAFTCALRRANLAKRWYFERPEPPRRERSLPWWDDMRNYIHGKFKLCFNETKWHLPASTSPYEKLDELLIITDFMEIHYVDGYVSLSSKYLRVYLTSLESLAKKSSLEIPHHPAIPFLETPSFFMDISIEWGCDSGNPMDHFIFALPAEGKPRDKVFDAFRSTSLSLKWSFSLKPYTTEPIEHQKKSNLNTTAPTVNVGVHDLAWLMKWWNLVFLPPHKLRLFSRFPRFGVPRFVRSGNLPLDRVMTEQCIRFDAMQLQINNMPLQADDPAKGLTLHFTKFRYEIAFSRGKQIFTFDCKREPLDLVYQGIDLHLLKVFINRIPESSTSMDSKIENKVLQTKDKDSLGCEKGKKKTSPTEKSRDDGFFLYSDYFTIRKQTPKADAARLSAWQEDGRKKTEMPLIKSEFDGGDESDHDQSGSDDEGFNVVVADSCQRVFVYGLKILWNLENRAAVLSWVGGLTQAFQPPKPSPSRQYTQTKILEKKQLIKEAEMSKDGALSSVSSTSQPSEPQQIKSSESPPSNGSGKPDLTSSSENALKRSNNSDSEEEGTRHFMVNVVQPQFNLHSEEANGRFLLAAGSGRVMVRSFHSIVQVGQEMFEKAIGSSNDATGGTGPEMTWSRVELSVMLEHVQAHVAPTDVDPGAGIQWLPKIHRRSSEVKRTGALLERVFMPCQMYFRYTRHKGGTPELKVKPLKELTFNSPDITAGMTSRQFQVMMDVLTNLLFARTPKKPKSNLSYPLDNDDDNIEEASDAVVPDGVEEVVLAKIGVEVKERARKLLLDDIRALSICGETSHGQSQSPKANDIAWIVTGSRLMLVKQLKKRLVNVRNGRKEAYSMLRTAMQKAAQLRLMEKEKNKSPSFAMRISVRIKKIVWSMLADGKSFSEAEINDMIFEFDRDYKDIGIAQLTTKLFVLKNGLANAKSDTVVSPWNPPAEWGKNAMLRVNAWQGAPTGGNPVIESFLVDIYPLKIYLTEAMYRMMWGYFFPGDEQQPQKRQELFKVSTTAGTRRKKNTSVAETNSPNNQSSKETTFAQKPELRRTSSFDRTWEETVAESVANELVSQMEGQTNTQYEPQDAAKDSKLLRPVRSTREDKKIVEPNELKQSRPQKMMDFRNIKISQVELQLTYEGLPFAVSDVRLLMDTFHREDFTGTWARLFSRVKKHIVWGVLKSVTGMQGKKFKAKSSSQKEPSTALISAADFNLSDSDGDEAGSSDQLPAFLKKPSDGAGDGFATSVKGLFSTQKKKAMAFVLKTMKGDADHDFHGERSENEIEFSPFARQLTITKTKKLIRRHTKKLNKSKVHKVTATELEVAELPPRAPGYNTDSSSDSSSAETSPKD</sequence>
<comment type="function">
    <text evidence="5">May be involved in membrane trafficking. Required for tip growth in pollen tubes and root hairs.</text>
</comment>
<comment type="subcellular location">
    <subcellularLocation>
        <location evidence="1">Secreted</location>
    </subcellularLocation>
    <subcellularLocation>
        <location evidence="5">Golgi apparatus</location>
    </subcellularLocation>
</comment>
<comment type="tissue specificity">
    <text evidence="5">Mature pollen-specific.</text>
</comment>
<comment type="disruption phenotype">
    <text evidence="5">Severe pollen transmission deficit due to altered pollen tubes that are short and twisted.</text>
</comment>
<comment type="similarity">
    <text evidence="7">Belongs to the SABRE family.</text>
</comment>
<evidence type="ECO:0000250" key="1">
    <source>
        <dbReference type="UniProtKB" id="Q6IMT0"/>
    </source>
</evidence>
<evidence type="ECO:0000255" key="2"/>
<evidence type="ECO:0000255" key="3">
    <source>
        <dbReference type="PROSITE-ProRule" id="PRU00498"/>
    </source>
</evidence>
<evidence type="ECO:0000256" key="4">
    <source>
        <dbReference type="SAM" id="MobiDB-lite"/>
    </source>
</evidence>
<evidence type="ECO:0000269" key="5">
    <source>
    </source>
</evidence>
<evidence type="ECO:0000303" key="6">
    <source>
    </source>
</evidence>
<evidence type="ECO:0000305" key="7"/>
<evidence type="ECO:0000312" key="8">
    <source>
        <dbReference type="EMBL" id="AFW88363.1"/>
    </source>
</evidence>
<evidence type="ECO:0000312" key="9">
    <source>
        <dbReference type="Proteomes" id="UP000007305"/>
    </source>
</evidence>
<protein>
    <recommendedName>
        <fullName evidence="6">Protein ABERRANT POLLEN TRANSMISSION 1</fullName>
    </recommendedName>
</protein>
<accession>K7VLR4</accession>
<accession>Q4JQG0</accession>
<feature type="signal peptide" evidence="2">
    <location>
        <begin position="1"/>
        <end position="43"/>
    </location>
</feature>
<feature type="chain" id="PRO_0000432483" description="Protein ABERRANT POLLEN TRANSMISSION 1" evidence="2">
    <location>
        <begin position="44"/>
        <end position="2605"/>
    </location>
</feature>
<feature type="region of interest" description="Disordered" evidence="4">
    <location>
        <begin position="137"/>
        <end position="158"/>
    </location>
</feature>
<feature type="region of interest" description="Disordered" evidence="4">
    <location>
        <begin position="305"/>
        <end position="326"/>
    </location>
</feature>
<feature type="region of interest" description="Disordered" evidence="4">
    <location>
        <begin position="1761"/>
        <end position="1818"/>
    </location>
</feature>
<feature type="region of interest" description="Disordered" evidence="4">
    <location>
        <begin position="2269"/>
        <end position="2312"/>
    </location>
</feature>
<feature type="region of interest" description="Disordered" evidence="4">
    <location>
        <begin position="2332"/>
        <end position="2361"/>
    </location>
</feature>
<feature type="region of interest" description="Disordered" evidence="4">
    <location>
        <begin position="2574"/>
        <end position="2605"/>
    </location>
</feature>
<feature type="compositionally biased region" description="Basic and acidic residues" evidence="4">
    <location>
        <begin position="311"/>
        <end position="326"/>
    </location>
</feature>
<feature type="compositionally biased region" description="Low complexity" evidence="4">
    <location>
        <begin position="1768"/>
        <end position="1781"/>
    </location>
</feature>
<feature type="compositionally biased region" description="Polar residues" evidence="4">
    <location>
        <begin position="1782"/>
        <end position="1812"/>
    </location>
</feature>
<feature type="compositionally biased region" description="Polar residues" evidence="4">
    <location>
        <begin position="2281"/>
        <end position="2300"/>
    </location>
</feature>
<feature type="compositionally biased region" description="Basic and acidic residues" evidence="4">
    <location>
        <begin position="2303"/>
        <end position="2312"/>
    </location>
</feature>
<feature type="compositionally biased region" description="Basic and acidic residues" evidence="4">
    <location>
        <begin position="2343"/>
        <end position="2361"/>
    </location>
</feature>
<feature type="glycosylation site" description="N-linked (GlcNAc...) asparagine" evidence="3">
    <location>
        <position position="232"/>
    </location>
</feature>
<feature type="glycosylation site" description="N-linked (GlcNAc...) asparagine" evidence="3">
    <location>
        <position position="320"/>
    </location>
</feature>
<feature type="glycosylation site" description="N-linked (GlcNAc...) asparagine" evidence="3">
    <location>
        <position position="348"/>
    </location>
</feature>
<feature type="glycosylation site" description="N-linked (GlcNAc...) asparagine" evidence="3">
    <location>
        <position position="516"/>
    </location>
</feature>
<feature type="glycosylation site" description="N-linked (GlcNAc...) asparagine" evidence="3">
    <location>
        <position position="587"/>
    </location>
</feature>
<feature type="glycosylation site" description="N-linked (GlcNAc...) asparagine" evidence="3">
    <location>
        <position position="628"/>
    </location>
</feature>
<feature type="glycosylation site" description="N-linked (GlcNAc...) asparagine" evidence="3">
    <location>
        <position position="696"/>
    </location>
</feature>
<feature type="glycosylation site" description="N-linked (GlcNAc...) asparagine" evidence="3">
    <location>
        <position position="779"/>
    </location>
</feature>
<feature type="glycosylation site" description="N-linked (GlcNAc...) asparagine" evidence="3">
    <location>
        <position position="1171"/>
    </location>
</feature>
<feature type="glycosylation site" description="N-linked (GlcNAc...) asparagine" evidence="3">
    <location>
        <position position="1318"/>
    </location>
</feature>
<feature type="glycosylation site" description="N-linked (GlcNAc...) asparagine" evidence="3">
    <location>
        <position position="1459"/>
    </location>
</feature>
<feature type="glycosylation site" description="N-linked (GlcNAc...) asparagine" evidence="3">
    <location>
        <position position="1791"/>
    </location>
</feature>
<feature type="glycosylation site" description="N-linked (GlcNAc...) asparagine" evidence="3">
    <location>
        <position position="1810"/>
    </location>
</feature>
<feature type="glycosylation site" description="N-linked (GlcNAc...) asparagine" evidence="3">
    <location>
        <position position="2003"/>
    </location>
</feature>
<feature type="glycosylation site" description="N-linked (GlcNAc...) asparagine" evidence="3">
    <location>
        <position position="2280"/>
    </location>
</feature>
<feature type="glycosylation site" description="N-linked (GlcNAc...) asparagine" evidence="3">
    <location>
        <position position="2291"/>
    </location>
</feature>
<feature type="glycosylation site" description="N-linked (GlcNAc...) asparagine" evidence="3">
    <location>
        <position position="2468"/>
    </location>
</feature>
<feature type="glycosylation site" description="N-linked (GlcNAc...) asparagine" evidence="3">
    <location>
        <position position="2564"/>
    </location>
</feature>
<feature type="sequence conflict" description="In Ref. 1; AAY85656." evidence="7" ref="1">
    <original>Q</original>
    <variation>P</variation>
    <location>
        <position position="247"/>
    </location>
</feature>
<feature type="sequence conflict" description="In Ref. 1; AAY85656." evidence="7" ref="1">
    <original>D</original>
    <variation>DE</variation>
    <location>
        <position position="820"/>
    </location>
</feature>
<feature type="sequence conflict" description="In Ref. 1; AAY85656." evidence="7" ref="1">
    <original>AQKK</original>
    <variation>RHKRS</variation>
    <location>
        <begin position="842"/>
        <end position="845"/>
    </location>
</feature>
<feature type="sequence conflict" description="In Ref. 1; AAY85656." evidence="7" ref="1">
    <original>S</original>
    <variation>P</variation>
    <location>
        <position position="1043"/>
    </location>
</feature>